<gene>
    <name evidence="1" type="primary">menD</name>
    <name type="ordered locus">Ppha_2423</name>
</gene>
<keyword id="KW-0460">Magnesium</keyword>
<keyword id="KW-0464">Manganese</keyword>
<keyword id="KW-0474">Menaquinone biosynthesis</keyword>
<keyword id="KW-0479">Metal-binding</keyword>
<keyword id="KW-1185">Reference proteome</keyword>
<keyword id="KW-0786">Thiamine pyrophosphate</keyword>
<keyword id="KW-0808">Transferase</keyword>
<proteinExistence type="inferred from homology"/>
<reference key="1">
    <citation type="submission" date="2008-06" db="EMBL/GenBank/DDBJ databases">
        <title>Complete sequence of Pelodictyon phaeoclathratiforme BU-1.</title>
        <authorList>
            <consortium name="US DOE Joint Genome Institute"/>
            <person name="Lucas S."/>
            <person name="Copeland A."/>
            <person name="Lapidus A."/>
            <person name="Glavina del Rio T."/>
            <person name="Dalin E."/>
            <person name="Tice H."/>
            <person name="Bruce D."/>
            <person name="Goodwin L."/>
            <person name="Pitluck S."/>
            <person name="Schmutz J."/>
            <person name="Larimer F."/>
            <person name="Land M."/>
            <person name="Hauser L."/>
            <person name="Kyrpides N."/>
            <person name="Mikhailova N."/>
            <person name="Liu Z."/>
            <person name="Li T."/>
            <person name="Zhao F."/>
            <person name="Overmann J."/>
            <person name="Bryant D.A."/>
            <person name="Richardson P."/>
        </authorList>
    </citation>
    <scope>NUCLEOTIDE SEQUENCE [LARGE SCALE GENOMIC DNA]</scope>
    <source>
        <strain>DSM 5477 / BU-1</strain>
    </source>
</reference>
<feature type="chain" id="PRO_1000187084" description="2-succinyl-5-enolpyruvyl-6-hydroxy-3-cyclohexene-1-carboxylate synthase">
    <location>
        <begin position="1"/>
        <end position="593"/>
    </location>
</feature>
<comment type="function">
    <text evidence="1">Catalyzes the thiamine diphosphate-dependent decarboxylation of 2-oxoglutarate and the subsequent addition of the resulting succinic semialdehyde-thiamine pyrophosphate anion to isochorismate to yield 2-succinyl-5-enolpyruvyl-6-hydroxy-3-cyclohexene-1-carboxylate (SEPHCHC).</text>
</comment>
<comment type="catalytic activity">
    <reaction evidence="1">
        <text>isochorismate + 2-oxoglutarate + H(+) = 5-enolpyruvoyl-6-hydroxy-2-succinyl-cyclohex-3-ene-1-carboxylate + CO2</text>
        <dbReference type="Rhea" id="RHEA:25593"/>
        <dbReference type="ChEBI" id="CHEBI:15378"/>
        <dbReference type="ChEBI" id="CHEBI:16526"/>
        <dbReference type="ChEBI" id="CHEBI:16810"/>
        <dbReference type="ChEBI" id="CHEBI:29780"/>
        <dbReference type="ChEBI" id="CHEBI:58818"/>
        <dbReference type="EC" id="2.2.1.9"/>
    </reaction>
</comment>
<comment type="cofactor">
    <cofactor evidence="1">
        <name>Mg(2+)</name>
        <dbReference type="ChEBI" id="CHEBI:18420"/>
    </cofactor>
    <cofactor evidence="1">
        <name>Mn(2+)</name>
        <dbReference type="ChEBI" id="CHEBI:29035"/>
    </cofactor>
</comment>
<comment type="cofactor">
    <cofactor evidence="1">
        <name>thiamine diphosphate</name>
        <dbReference type="ChEBI" id="CHEBI:58937"/>
    </cofactor>
    <text evidence="1">Binds 1 thiamine pyrophosphate per subunit.</text>
</comment>
<comment type="pathway">
    <text evidence="1">Quinol/quinone metabolism; 1,4-dihydroxy-2-naphthoate biosynthesis; 1,4-dihydroxy-2-naphthoate from chorismate: step 2/7.</text>
</comment>
<comment type="pathway">
    <text evidence="1">Quinol/quinone metabolism; menaquinone biosynthesis.</text>
</comment>
<comment type="subunit">
    <text evidence="1">Homodimer.</text>
</comment>
<comment type="similarity">
    <text evidence="1">Belongs to the TPP enzyme family. MenD subfamily.</text>
</comment>
<accession>B4SET5</accession>
<protein>
    <recommendedName>
        <fullName evidence="1">2-succinyl-5-enolpyruvyl-6-hydroxy-3-cyclohexene-1-carboxylate synthase</fullName>
        <shortName evidence="1">SEPHCHC synthase</shortName>
        <ecNumber evidence="1">2.2.1.9</ecNumber>
    </recommendedName>
    <alternativeName>
        <fullName evidence="1">Menaquinone biosynthesis protein MenD</fullName>
    </alternativeName>
</protein>
<dbReference type="EC" id="2.2.1.9" evidence="1"/>
<dbReference type="EMBL" id="CP001110">
    <property type="protein sequence ID" value="ACF44611.1"/>
    <property type="molecule type" value="Genomic_DNA"/>
</dbReference>
<dbReference type="RefSeq" id="WP_012509085.1">
    <property type="nucleotide sequence ID" value="NC_011060.1"/>
</dbReference>
<dbReference type="SMR" id="B4SET5"/>
<dbReference type="STRING" id="324925.Ppha_2423"/>
<dbReference type="KEGG" id="pph:Ppha_2423"/>
<dbReference type="eggNOG" id="COG1165">
    <property type="taxonomic scope" value="Bacteria"/>
</dbReference>
<dbReference type="HOGENOM" id="CLU_006051_3_0_10"/>
<dbReference type="OrthoDB" id="9791859at2"/>
<dbReference type="UniPathway" id="UPA00079"/>
<dbReference type="UniPathway" id="UPA01057">
    <property type="reaction ID" value="UER00164"/>
</dbReference>
<dbReference type="Proteomes" id="UP000002724">
    <property type="component" value="Chromosome"/>
</dbReference>
<dbReference type="GO" id="GO:0070204">
    <property type="term" value="F:2-succinyl-5-enolpyruvyl-6-hydroxy-3-cyclohexene-1-carboxylic-acid synthase activity"/>
    <property type="evidence" value="ECO:0007669"/>
    <property type="project" value="UniProtKB-UniRule"/>
</dbReference>
<dbReference type="GO" id="GO:0000287">
    <property type="term" value="F:magnesium ion binding"/>
    <property type="evidence" value="ECO:0007669"/>
    <property type="project" value="UniProtKB-UniRule"/>
</dbReference>
<dbReference type="GO" id="GO:0030145">
    <property type="term" value="F:manganese ion binding"/>
    <property type="evidence" value="ECO:0007669"/>
    <property type="project" value="UniProtKB-UniRule"/>
</dbReference>
<dbReference type="GO" id="GO:0030976">
    <property type="term" value="F:thiamine pyrophosphate binding"/>
    <property type="evidence" value="ECO:0007669"/>
    <property type="project" value="UniProtKB-UniRule"/>
</dbReference>
<dbReference type="GO" id="GO:0009234">
    <property type="term" value="P:menaquinone biosynthetic process"/>
    <property type="evidence" value="ECO:0007669"/>
    <property type="project" value="UniProtKB-UniRule"/>
</dbReference>
<dbReference type="CDD" id="cd07037">
    <property type="entry name" value="TPP_PYR_MenD"/>
    <property type="match status" value="1"/>
</dbReference>
<dbReference type="CDD" id="cd02009">
    <property type="entry name" value="TPP_SHCHC_synthase"/>
    <property type="match status" value="1"/>
</dbReference>
<dbReference type="Gene3D" id="3.40.50.970">
    <property type="match status" value="2"/>
</dbReference>
<dbReference type="Gene3D" id="3.40.50.1220">
    <property type="entry name" value="TPP-binding domain"/>
    <property type="match status" value="1"/>
</dbReference>
<dbReference type="HAMAP" id="MF_01659">
    <property type="entry name" value="MenD"/>
    <property type="match status" value="1"/>
</dbReference>
<dbReference type="InterPro" id="IPR029035">
    <property type="entry name" value="DHS-like_NAD/FAD-binding_dom"/>
</dbReference>
<dbReference type="InterPro" id="IPR004433">
    <property type="entry name" value="MenaQ_synth_MenD"/>
</dbReference>
<dbReference type="InterPro" id="IPR032264">
    <property type="entry name" value="MenD_middle"/>
</dbReference>
<dbReference type="InterPro" id="IPR029061">
    <property type="entry name" value="THDP-binding"/>
</dbReference>
<dbReference type="InterPro" id="IPR012001">
    <property type="entry name" value="Thiamin_PyroP_enz_TPP-bd_dom"/>
</dbReference>
<dbReference type="InterPro" id="IPR011766">
    <property type="entry name" value="TPP_enzyme_TPP-bd"/>
</dbReference>
<dbReference type="NCBIfam" id="TIGR00173">
    <property type="entry name" value="menD"/>
    <property type="match status" value="1"/>
</dbReference>
<dbReference type="PANTHER" id="PTHR42916">
    <property type="entry name" value="2-SUCCINYL-5-ENOLPYRUVYL-6-HYDROXY-3-CYCLOHEXENE-1-CARBOXYLATE SYNTHASE"/>
    <property type="match status" value="1"/>
</dbReference>
<dbReference type="PANTHER" id="PTHR42916:SF1">
    <property type="entry name" value="PROTEIN PHYLLO, CHLOROPLASTIC"/>
    <property type="match status" value="1"/>
</dbReference>
<dbReference type="Pfam" id="PF02775">
    <property type="entry name" value="TPP_enzyme_C"/>
    <property type="match status" value="1"/>
</dbReference>
<dbReference type="Pfam" id="PF16582">
    <property type="entry name" value="TPP_enzyme_M_2"/>
    <property type="match status" value="1"/>
</dbReference>
<dbReference type="Pfam" id="PF02776">
    <property type="entry name" value="TPP_enzyme_N"/>
    <property type="match status" value="1"/>
</dbReference>
<dbReference type="PIRSF" id="PIRSF004983">
    <property type="entry name" value="MenD"/>
    <property type="match status" value="1"/>
</dbReference>
<dbReference type="SUPFAM" id="SSF52467">
    <property type="entry name" value="DHS-like NAD/FAD-binding domain"/>
    <property type="match status" value="1"/>
</dbReference>
<dbReference type="SUPFAM" id="SSF52518">
    <property type="entry name" value="Thiamin diphosphate-binding fold (THDP-binding)"/>
    <property type="match status" value="2"/>
</dbReference>
<evidence type="ECO:0000255" key="1">
    <source>
        <dbReference type="HAMAP-Rule" id="MF_01659"/>
    </source>
</evidence>
<organism>
    <name type="scientific">Pelodictyon phaeoclathratiforme (strain DSM 5477 / BU-1)</name>
    <dbReference type="NCBI Taxonomy" id="324925"/>
    <lineage>
        <taxon>Bacteria</taxon>
        <taxon>Pseudomonadati</taxon>
        <taxon>Chlorobiota</taxon>
        <taxon>Chlorobiia</taxon>
        <taxon>Chlorobiales</taxon>
        <taxon>Chlorobiaceae</taxon>
        <taxon>Chlorobium/Pelodictyon group</taxon>
        <taxon>Pelodictyon</taxon>
    </lineage>
</organism>
<name>MEND_PELPB</name>
<sequence>MNNRQINSLWSSIIIEELIRQGADFFCISPGSRSTPLTVAIARNPKARWKMFADERSAAFFALGYGRATARPAVLICTSGTAVANYFPAIVEASMDFQPILVLSADRPFELLECGANQTIRQENIFGSYTRWHMQLPVPSKEIPLKALLSTIAHAVVKTIGSPAGPVHLNQPFREPLEPEIPDLKDAWAAPLQEWLENGKPSGKSALPEKEPDAETLSLLREALAVAKEPLIIAGNMQKPEEAEAVEQLALELQIPLYTDFSSGLRLKSTTRPWQLAFASPHFTRHFKPDLVLHFGGHIIAKQPAAAIREWKPKHYIVVKNHANRLSPDHNVTLSIEASIASTAAKLKGCRTLSSGIINAATEEFFRRAEEEIDAECIGNKPVTEISAARLVSRLITAQQRLFLSNSMPVRDMDNFACSSHPHAIRSAINRGASGIDGIISTAAGFAEGDGKSTTLIIGDIAFLHDLNALSLLGAMTVPLQIIVLNNNGGGIFSFLPIAEYRDLMETHFATPQNYSIRSAAETFGLDYACPQTNQEFTRCYLEATGSPRSIIIELRSNRAENLHHHRALQARIETLTNHLYQGFIEKISEQPN</sequence>